<organism>
    <name type="scientific">Mus musculus</name>
    <name type="common">Mouse</name>
    <dbReference type="NCBI Taxonomy" id="10090"/>
    <lineage>
        <taxon>Eukaryota</taxon>
        <taxon>Metazoa</taxon>
        <taxon>Chordata</taxon>
        <taxon>Craniata</taxon>
        <taxon>Vertebrata</taxon>
        <taxon>Euteleostomi</taxon>
        <taxon>Mammalia</taxon>
        <taxon>Eutheria</taxon>
        <taxon>Euarchontoglires</taxon>
        <taxon>Glires</taxon>
        <taxon>Rodentia</taxon>
        <taxon>Myomorpha</taxon>
        <taxon>Muroidea</taxon>
        <taxon>Muridae</taxon>
        <taxon>Murinae</taxon>
        <taxon>Mus</taxon>
        <taxon>Mus</taxon>
    </lineage>
</organism>
<name>METL6_MOUSE</name>
<sequence length="282" mass="32786">MASFQRKGLQARILSTEEEEKLKRDQALVSAFKQQKLEKEAQKNWDLFYKRNSTNFFKDRHWTTREFEELRSCREYEGQKLTLLEAGCGVGNCLFPLLEEDLNLFAYACDFSPRAVDYVKQHPLYNAERCKVFQCDLTRDDLLDHVPPESVDAVTLIFVLSAVHPEKMRLVLLNVYKVLKPGRSVLFRDYGLNDHAMLRFKAGSKLGENFYVRQDGTRSYFFTDEFLAQLFVDAGYEEVVNEYVFRETVNKKEGLCVPRVFLQSKFRKPPKDPAPTSDSASL</sequence>
<feature type="chain" id="PRO_0000204455" description="tRNA N(3)-cytidine methyltransferase METTL6">
    <location>
        <begin position="1"/>
        <end position="282"/>
    </location>
</feature>
<feature type="binding site" evidence="1">
    <location>
        <position position="45"/>
    </location>
    <ligand>
        <name>S-adenosyl-L-methionine</name>
        <dbReference type="ChEBI" id="CHEBI:59789"/>
    </ligand>
</feature>
<feature type="binding site" evidence="1">
    <location>
        <position position="49"/>
    </location>
    <ligand>
        <name>S-adenosyl-L-methionine</name>
        <dbReference type="ChEBI" id="CHEBI:59789"/>
    </ligand>
</feature>
<feature type="binding site" evidence="1">
    <location>
        <position position="87"/>
    </location>
    <ligand>
        <name>S-adenosyl-L-methionine</name>
        <dbReference type="ChEBI" id="CHEBI:59789"/>
    </ligand>
</feature>
<feature type="binding site" evidence="1">
    <location>
        <position position="110"/>
    </location>
    <ligand>
        <name>S-adenosyl-L-methionine</name>
        <dbReference type="ChEBI" id="CHEBI:59789"/>
    </ligand>
</feature>
<feature type="binding site" evidence="1">
    <location>
        <position position="136"/>
    </location>
    <ligand>
        <name>S-adenosyl-L-methionine</name>
        <dbReference type="ChEBI" id="CHEBI:59789"/>
    </ligand>
</feature>
<feature type="binding site" evidence="1">
    <location>
        <position position="137"/>
    </location>
    <ligand>
        <name>S-adenosyl-L-methionine</name>
        <dbReference type="ChEBI" id="CHEBI:59789"/>
    </ligand>
</feature>
<feature type="binding site" evidence="1">
    <location>
        <position position="157"/>
    </location>
    <ligand>
        <name>S-adenosyl-L-methionine</name>
        <dbReference type="ChEBI" id="CHEBI:59789"/>
    </ligand>
</feature>
<feature type="splice variant" id="VSP_008482" description="In isoform 3." evidence="4">
    <location>
        <begin position="76"/>
        <end position="120"/>
    </location>
</feature>
<feature type="splice variant" id="VSP_008481" description="In isoform 2." evidence="4">
    <original>EFLAQLFVDAGYEEVVNEYVFRETVNKKEGLCVPRVFLQSKFRKPPKDPAPTSDSASL</original>
    <variation>GKRNGVSP</variation>
    <location>
        <begin position="225"/>
        <end position="282"/>
    </location>
</feature>
<reference key="1">
    <citation type="journal article" date="2005" name="Science">
        <title>The transcriptional landscape of the mammalian genome.</title>
        <authorList>
            <person name="Carninci P."/>
            <person name="Kasukawa T."/>
            <person name="Katayama S."/>
            <person name="Gough J."/>
            <person name="Frith M.C."/>
            <person name="Maeda N."/>
            <person name="Oyama R."/>
            <person name="Ravasi T."/>
            <person name="Lenhard B."/>
            <person name="Wells C."/>
            <person name="Kodzius R."/>
            <person name="Shimokawa K."/>
            <person name="Bajic V.B."/>
            <person name="Brenner S.E."/>
            <person name="Batalov S."/>
            <person name="Forrest A.R."/>
            <person name="Zavolan M."/>
            <person name="Davis M.J."/>
            <person name="Wilming L.G."/>
            <person name="Aidinis V."/>
            <person name="Allen J.E."/>
            <person name="Ambesi-Impiombato A."/>
            <person name="Apweiler R."/>
            <person name="Aturaliya R.N."/>
            <person name="Bailey T.L."/>
            <person name="Bansal M."/>
            <person name="Baxter L."/>
            <person name="Beisel K.W."/>
            <person name="Bersano T."/>
            <person name="Bono H."/>
            <person name="Chalk A.M."/>
            <person name="Chiu K.P."/>
            <person name="Choudhary V."/>
            <person name="Christoffels A."/>
            <person name="Clutterbuck D.R."/>
            <person name="Crowe M.L."/>
            <person name="Dalla E."/>
            <person name="Dalrymple B.P."/>
            <person name="de Bono B."/>
            <person name="Della Gatta G."/>
            <person name="di Bernardo D."/>
            <person name="Down T."/>
            <person name="Engstrom P."/>
            <person name="Fagiolini M."/>
            <person name="Faulkner G."/>
            <person name="Fletcher C.F."/>
            <person name="Fukushima T."/>
            <person name="Furuno M."/>
            <person name="Futaki S."/>
            <person name="Gariboldi M."/>
            <person name="Georgii-Hemming P."/>
            <person name="Gingeras T.R."/>
            <person name="Gojobori T."/>
            <person name="Green R.E."/>
            <person name="Gustincich S."/>
            <person name="Harbers M."/>
            <person name="Hayashi Y."/>
            <person name="Hensch T.K."/>
            <person name="Hirokawa N."/>
            <person name="Hill D."/>
            <person name="Huminiecki L."/>
            <person name="Iacono M."/>
            <person name="Ikeo K."/>
            <person name="Iwama A."/>
            <person name="Ishikawa T."/>
            <person name="Jakt M."/>
            <person name="Kanapin A."/>
            <person name="Katoh M."/>
            <person name="Kawasawa Y."/>
            <person name="Kelso J."/>
            <person name="Kitamura H."/>
            <person name="Kitano H."/>
            <person name="Kollias G."/>
            <person name="Krishnan S.P."/>
            <person name="Kruger A."/>
            <person name="Kummerfeld S.K."/>
            <person name="Kurochkin I.V."/>
            <person name="Lareau L.F."/>
            <person name="Lazarevic D."/>
            <person name="Lipovich L."/>
            <person name="Liu J."/>
            <person name="Liuni S."/>
            <person name="McWilliam S."/>
            <person name="Madan Babu M."/>
            <person name="Madera M."/>
            <person name="Marchionni L."/>
            <person name="Matsuda H."/>
            <person name="Matsuzawa S."/>
            <person name="Miki H."/>
            <person name="Mignone F."/>
            <person name="Miyake S."/>
            <person name="Morris K."/>
            <person name="Mottagui-Tabar S."/>
            <person name="Mulder N."/>
            <person name="Nakano N."/>
            <person name="Nakauchi H."/>
            <person name="Ng P."/>
            <person name="Nilsson R."/>
            <person name="Nishiguchi S."/>
            <person name="Nishikawa S."/>
            <person name="Nori F."/>
            <person name="Ohara O."/>
            <person name="Okazaki Y."/>
            <person name="Orlando V."/>
            <person name="Pang K.C."/>
            <person name="Pavan W.J."/>
            <person name="Pavesi G."/>
            <person name="Pesole G."/>
            <person name="Petrovsky N."/>
            <person name="Piazza S."/>
            <person name="Reed J."/>
            <person name="Reid J.F."/>
            <person name="Ring B.Z."/>
            <person name="Ringwald M."/>
            <person name="Rost B."/>
            <person name="Ruan Y."/>
            <person name="Salzberg S.L."/>
            <person name="Sandelin A."/>
            <person name="Schneider C."/>
            <person name="Schoenbach C."/>
            <person name="Sekiguchi K."/>
            <person name="Semple C.A."/>
            <person name="Seno S."/>
            <person name="Sessa L."/>
            <person name="Sheng Y."/>
            <person name="Shibata Y."/>
            <person name="Shimada H."/>
            <person name="Shimada K."/>
            <person name="Silva D."/>
            <person name="Sinclair B."/>
            <person name="Sperling S."/>
            <person name="Stupka E."/>
            <person name="Sugiura K."/>
            <person name="Sultana R."/>
            <person name="Takenaka Y."/>
            <person name="Taki K."/>
            <person name="Tammoja K."/>
            <person name="Tan S.L."/>
            <person name="Tang S."/>
            <person name="Taylor M.S."/>
            <person name="Tegner J."/>
            <person name="Teichmann S.A."/>
            <person name="Ueda H.R."/>
            <person name="van Nimwegen E."/>
            <person name="Verardo R."/>
            <person name="Wei C.L."/>
            <person name="Yagi K."/>
            <person name="Yamanishi H."/>
            <person name="Zabarovsky E."/>
            <person name="Zhu S."/>
            <person name="Zimmer A."/>
            <person name="Hide W."/>
            <person name="Bult C."/>
            <person name="Grimmond S.M."/>
            <person name="Teasdale R.D."/>
            <person name="Liu E.T."/>
            <person name="Brusic V."/>
            <person name="Quackenbush J."/>
            <person name="Wahlestedt C."/>
            <person name="Mattick J.S."/>
            <person name="Hume D.A."/>
            <person name="Kai C."/>
            <person name="Sasaki D."/>
            <person name="Tomaru Y."/>
            <person name="Fukuda S."/>
            <person name="Kanamori-Katayama M."/>
            <person name="Suzuki M."/>
            <person name="Aoki J."/>
            <person name="Arakawa T."/>
            <person name="Iida J."/>
            <person name="Imamura K."/>
            <person name="Itoh M."/>
            <person name="Kato T."/>
            <person name="Kawaji H."/>
            <person name="Kawagashira N."/>
            <person name="Kawashima T."/>
            <person name="Kojima M."/>
            <person name="Kondo S."/>
            <person name="Konno H."/>
            <person name="Nakano K."/>
            <person name="Ninomiya N."/>
            <person name="Nishio T."/>
            <person name="Okada M."/>
            <person name="Plessy C."/>
            <person name="Shibata K."/>
            <person name="Shiraki T."/>
            <person name="Suzuki S."/>
            <person name="Tagami M."/>
            <person name="Waki K."/>
            <person name="Watahiki A."/>
            <person name="Okamura-Oho Y."/>
            <person name="Suzuki H."/>
            <person name="Kawai J."/>
            <person name="Hayashizaki Y."/>
        </authorList>
    </citation>
    <scope>NUCLEOTIDE SEQUENCE [LARGE SCALE MRNA] (ISOFORMS 1; 2 AND 3)</scope>
    <source>
        <strain>C57BL/6J</strain>
        <tissue>Olfactory bulb</tissue>
        <tissue>Placenta</tissue>
        <tissue>Testis</tissue>
    </source>
</reference>
<reference key="2">
    <citation type="journal article" date="2004" name="Genome Res.">
        <title>The status, quality, and expansion of the NIH full-length cDNA project: the Mammalian Gene Collection (MGC).</title>
        <authorList>
            <consortium name="The MGC Project Team"/>
        </authorList>
    </citation>
    <scope>NUCLEOTIDE SEQUENCE [LARGE SCALE MRNA] (ISOFORM 1)</scope>
    <source>
        <tissue>Retina</tissue>
    </source>
</reference>
<reference key="3">
    <citation type="journal article" date="2017" name="J. Biol. Chem.">
        <title>Three distinct 3-methylcytidine (m3C) methyltransferases modify tRNA and mRNA in mice and humans.</title>
        <authorList>
            <person name="Xu L."/>
            <person name="Liu X."/>
            <person name="Sheng N."/>
            <person name="Oo K.S."/>
            <person name="Liang J."/>
            <person name="Chionh Y.H."/>
            <person name="Xu J."/>
            <person name="Ye F."/>
            <person name="Gao Y.G."/>
            <person name="Dedon P.C."/>
            <person name="Fu X.Y."/>
        </authorList>
    </citation>
    <scope>FUNCTION</scope>
    <scope>CATALYTIC ACTIVITY</scope>
    <scope>DISRUPTION PHENOTYPE</scope>
    <scope>INTERACTION WITH SARS1</scope>
</reference>
<reference key="4">
    <citation type="journal article" date="2020" name="Sci. Adv.">
        <title>METTL6 is a tRNA m3C methyltransferase that regulates pluripotency and tumor cell growth.</title>
        <authorList>
            <person name="Ignatova V.V."/>
            <person name="Kaiser S."/>
            <person name="Ho J.S.Y."/>
            <person name="Bing X."/>
            <person name="Stolz P."/>
            <person name="Tan Y.X."/>
            <person name="Lee C.L."/>
            <person name="Gay F.P.H."/>
            <person name="Lastres P.R."/>
            <person name="Gerlini R."/>
            <person name="Rathkolb B."/>
            <person name="Aguilar-Pimentel A."/>
            <person name="Sanz-Moreno A."/>
            <person name="Klein-Rodewald T."/>
            <person name="Calzada-Wack J."/>
            <person name="Ibragimov E."/>
            <person name="Valenta M."/>
            <person name="Lukauskas S."/>
            <person name="Pavesi A."/>
            <person name="Marschall S."/>
            <person name="Leuchtenberger S."/>
            <person name="Fuchs H."/>
            <person name="Gailus-Durner V."/>
            <person name="de Angelis M.H."/>
            <person name="Bultmann S."/>
            <person name="Rando O.J."/>
            <person name="Guccione E."/>
            <person name="Kellner S.M."/>
            <person name="Schneider R."/>
        </authorList>
    </citation>
    <scope>FUNCTION</scope>
</reference>
<proteinExistence type="evidence at protein level"/>
<evidence type="ECO:0000250" key="1">
    <source>
        <dbReference type="UniProtKB" id="Q8TCB7"/>
    </source>
</evidence>
<evidence type="ECO:0000269" key="2">
    <source>
    </source>
</evidence>
<evidence type="ECO:0000269" key="3">
    <source>
    </source>
</evidence>
<evidence type="ECO:0000303" key="4">
    <source>
    </source>
</evidence>
<evidence type="ECO:0000303" key="5">
    <source>
    </source>
</evidence>
<evidence type="ECO:0000305" key="6"/>
<evidence type="ECO:0000305" key="7">
    <source>
    </source>
</evidence>
<evidence type="ECO:0000312" key="8">
    <source>
        <dbReference type="MGI" id="MGI:1914261"/>
    </source>
</evidence>
<comment type="function">
    <text evidence="1 2">S-adenosyl-L-methionine-dependent methyltransferase that mediates N(3)-methylcytidine modification of residue 32 of the tRNA anticodon loop of tRNA(Ser), including tRNA(Ser)(UGA) and tRNA(Ser)(GCU) (PubMed:28655767). Interaction with SARS1/SerRS is required for N(3)-methylcytidine methylation (By similarity).</text>
</comment>
<comment type="catalytic activity">
    <reaction evidence="7">
        <text>cytidine(32) in tRNA(Ser) + S-adenosyl-L-methionine = N(3)-methylcytidine(32) in tRNA(Ser) + S-adenosyl-L-homocysteine + H(+)</text>
        <dbReference type="Rhea" id="RHEA:50956"/>
        <dbReference type="Rhea" id="RHEA-COMP:12849"/>
        <dbReference type="Rhea" id="RHEA-COMP:12851"/>
        <dbReference type="ChEBI" id="CHEBI:15378"/>
        <dbReference type="ChEBI" id="CHEBI:57856"/>
        <dbReference type="ChEBI" id="CHEBI:59789"/>
        <dbReference type="ChEBI" id="CHEBI:74894"/>
        <dbReference type="ChEBI" id="CHEBI:82748"/>
    </reaction>
    <physiologicalReaction direction="left-to-right" evidence="7">
        <dbReference type="Rhea" id="RHEA:50957"/>
    </physiologicalReaction>
</comment>
<comment type="subunit">
    <text evidence="1">Monomer (By similarity). Interacts with SARS1/SerRS; interaction is mediated via tRNA(Ser) and is required for N(3)-methylcytidine methylation (By similarity).</text>
</comment>
<comment type="subcellular location">
    <subcellularLocation>
        <location evidence="1">Cytoplasm</location>
    </subcellularLocation>
    <subcellularLocation>
        <location evidence="1">Nucleus</location>
    </subcellularLocation>
</comment>
<comment type="alternative products">
    <event type="alternative splicing"/>
    <isoform>
        <id>Q8BVH9-1</id>
        <name>1</name>
        <sequence type="displayed"/>
    </isoform>
    <isoform>
        <id>Q8BVH9-2</id>
        <name>2</name>
        <sequence type="described" ref="VSP_008481"/>
    </isoform>
    <isoform>
        <id>Q8BVH9-3</id>
        <name>3</name>
        <sequence type="described" ref="VSP_008482"/>
    </isoform>
</comment>
<comment type="disruption phenotype">
    <text evidence="2 3">Mice were born with normal Mendelian ratio without developmental defects (PubMed:28655767, PubMed:32923617). However, male show a significant reduction in body weight over time due to reduced energy expenditure (PubMed:32923617). Cells show reduced N(3)-methylcytidine modification in tRNA fractions (PubMed:28655767).</text>
</comment>
<comment type="miscellaneous">
    <molecule>Isoform 2</molecule>
    <text evidence="6">Due to intron retention.</text>
</comment>
<comment type="similarity">
    <text evidence="6">Belongs to the methyltransferase superfamily. METL family.</text>
</comment>
<gene>
    <name evidence="5 8" type="primary">Mettl6</name>
</gene>
<dbReference type="EC" id="2.1.1.-" evidence="7"/>
<dbReference type="EMBL" id="AK005448">
    <property type="protein sequence ID" value="BAB24041.1"/>
    <property type="molecule type" value="mRNA"/>
</dbReference>
<dbReference type="EMBL" id="AK006715">
    <property type="protein sequence ID" value="BAB24713.1"/>
    <property type="molecule type" value="mRNA"/>
</dbReference>
<dbReference type="EMBL" id="AK078185">
    <property type="protein sequence ID" value="BAC37165.1"/>
    <property type="molecule type" value="mRNA"/>
</dbReference>
<dbReference type="EMBL" id="BC030449">
    <property type="protein sequence ID" value="AAH30449.1"/>
    <property type="molecule type" value="mRNA"/>
</dbReference>
<dbReference type="CCDS" id="CCDS26913.1">
    <molecule id="Q8BVH9-1"/>
</dbReference>
<dbReference type="CCDS" id="CCDS88617.1">
    <molecule id="Q8BVH9-3"/>
</dbReference>
<dbReference type="CCDS" id="CCDS88618.1">
    <molecule id="Q8BVH9-2"/>
</dbReference>
<dbReference type="RefSeq" id="NP_001346775.1">
    <molecule id="Q8BVH9-1"/>
    <property type="nucleotide sequence ID" value="NM_001359846.1"/>
</dbReference>
<dbReference type="RefSeq" id="NP_001346777.1">
    <molecule id="Q8BVH9-3"/>
    <property type="nucleotide sequence ID" value="NM_001359848.1"/>
</dbReference>
<dbReference type="RefSeq" id="NP_001361702.1">
    <molecule id="Q8BVH9-2"/>
    <property type="nucleotide sequence ID" value="NM_001374773.1"/>
</dbReference>
<dbReference type="RefSeq" id="NP_080183.1">
    <molecule id="Q8BVH9-1"/>
    <property type="nucleotide sequence ID" value="NM_025907.4"/>
</dbReference>
<dbReference type="RefSeq" id="XP_006519495.1">
    <property type="nucleotide sequence ID" value="XM_006519432.3"/>
</dbReference>
<dbReference type="RefSeq" id="XP_006519499.1">
    <property type="nucleotide sequence ID" value="XM_006519436.3"/>
</dbReference>
<dbReference type="SMR" id="Q8BVH9"/>
<dbReference type="FunCoup" id="Q8BVH9">
    <property type="interactions" value="3677"/>
</dbReference>
<dbReference type="STRING" id="10090.ENSMUSP00000077138"/>
<dbReference type="iPTMnet" id="Q8BVH9"/>
<dbReference type="PhosphoSitePlus" id="Q8BVH9"/>
<dbReference type="PaxDb" id="10090-ENSMUSP00000077138"/>
<dbReference type="PeptideAtlas" id="Q8BVH9"/>
<dbReference type="ProteomicsDB" id="292299">
    <molecule id="Q8BVH9-1"/>
</dbReference>
<dbReference type="ProteomicsDB" id="292300">
    <molecule id="Q8BVH9-2"/>
</dbReference>
<dbReference type="ProteomicsDB" id="292301">
    <molecule id="Q8BVH9-3"/>
</dbReference>
<dbReference type="Pumba" id="Q8BVH9"/>
<dbReference type="Antibodypedia" id="26744">
    <property type="antibodies" value="126 antibodies from 21 providers"/>
</dbReference>
<dbReference type="DNASU" id="67011"/>
<dbReference type="Ensembl" id="ENSMUST00000055303.5">
    <molecule id="Q8BVH9-1"/>
    <property type="protein sequence ID" value="ENSMUSP00000077138.3"/>
    <property type="gene ID" value="ENSMUSG00000021891.9"/>
</dbReference>
<dbReference type="Ensembl" id="ENSMUST00000227595.2">
    <molecule id="Q8BVH9-3"/>
    <property type="protein sequence ID" value="ENSMUSP00000154580.2"/>
    <property type="gene ID" value="ENSMUSG00000021891.9"/>
</dbReference>
<dbReference type="Ensembl" id="ENSMUST00000228727.2">
    <molecule id="Q8BVH9-2"/>
    <property type="protein sequence ID" value="ENSMUSP00000154679.2"/>
    <property type="gene ID" value="ENSMUSG00000021891.9"/>
</dbReference>
<dbReference type="GeneID" id="67011"/>
<dbReference type="KEGG" id="mmu:67011"/>
<dbReference type="UCSC" id="uc007sxq.1">
    <molecule id="Q8BVH9-1"/>
    <property type="organism name" value="mouse"/>
</dbReference>
<dbReference type="UCSC" id="uc007sxr.1">
    <molecule id="Q8BVH9-3"/>
    <property type="organism name" value="mouse"/>
</dbReference>
<dbReference type="UCSC" id="uc007sxs.1">
    <molecule id="Q8BVH9-2"/>
    <property type="organism name" value="mouse"/>
</dbReference>
<dbReference type="AGR" id="MGI:1914261"/>
<dbReference type="CTD" id="131965"/>
<dbReference type="MGI" id="MGI:1914261">
    <property type="gene designation" value="Mettl6"/>
</dbReference>
<dbReference type="VEuPathDB" id="HostDB:ENSMUSG00000021891"/>
<dbReference type="eggNOG" id="KOG2361">
    <property type="taxonomic scope" value="Eukaryota"/>
</dbReference>
<dbReference type="GeneTree" id="ENSGT00940000156679"/>
<dbReference type="HOGENOM" id="CLU_029724_2_2_1"/>
<dbReference type="InParanoid" id="Q8BVH9"/>
<dbReference type="OMA" id="DAQRNWD"/>
<dbReference type="OrthoDB" id="417697at2759"/>
<dbReference type="PhylomeDB" id="Q8BVH9"/>
<dbReference type="TreeFam" id="TF321001"/>
<dbReference type="BioGRID-ORCS" id="67011">
    <property type="hits" value="6 hits in 79 CRISPR screens"/>
</dbReference>
<dbReference type="ChiTaRS" id="Mettl6">
    <property type="organism name" value="mouse"/>
</dbReference>
<dbReference type="PRO" id="PR:Q8BVH9"/>
<dbReference type="Proteomes" id="UP000000589">
    <property type="component" value="Chromosome 14"/>
</dbReference>
<dbReference type="RNAct" id="Q8BVH9">
    <property type="molecule type" value="protein"/>
</dbReference>
<dbReference type="Bgee" id="ENSMUSG00000021891">
    <property type="expression patterns" value="Expressed in spermatocyte and 262 other cell types or tissues"/>
</dbReference>
<dbReference type="ExpressionAtlas" id="Q8BVH9">
    <property type="expression patterns" value="baseline and differential"/>
</dbReference>
<dbReference type="GO" id="GO:0005737">
    <property type="term" value="C:cytoplasm"/>
    <property type="evidence" value="ECO:0000250"/>
    <property type="project" value="UniProtKB"/>
</dbReference>
<dbReference type="GO" id="GO:0005634">
    <property type="term" value="C:nucleus"/>
    <property type="evidence" value="ECO:0000250"/>
    <property type="project" value="UniProtKB"/>
</dbReference>
<dbReference type="GO" id="GO:0019899">
    <property type="term" value="F:enzyme binding"/>
    <property type="evidence" value="ECO:0007669"/>
    <property type="project" value="Ensembl"/>
</dbReference>
<dbReference type="GO" id="GO:0052735">
    <property type="term" value="F:tRNA (cytidine-3-)-methyltransferase activity"/>
    <property type="evidence" value="ECO:0000315"/>
    <property type="project" value="MGI"/>
</dbReference>
<dbReference type="GO" id="GO:0030488">
    <property type="term" value="P:tRNA methylation"/>
    <property type="evidence" value="ECO:0000315"/>
    <property type="project" value="MGI"/>
</dbReference>
<dbReference type="CDD" id="cd02440">
    <property type="entry name" value="AdoMet_MTases"/>
    <property type="match status" value="1"/>
</dbReference>
<dbReference type="FunFam" id="3.40.50.150:FF:000279">
    <property type="entry name" value="Methyltransferase-like protein"/>
    <property type="match status" value="1"/>
</dbReference>
<dbReference type="Gene3D" id="3.40.50.150">
    <property type="entry name" value="Vaccinia Virus protein VP39"/>
    <property type="match status" value="1"/>
</dbReference>
<dbReference type="InterPro" id="IPR013217">
    <property type="entry name" value="Methyltransf_12"/>
</dbReference>
<dbReference type="InterPro" id="IPR026113">
    <property type="entry name" value="METTL2/6/8-like"/>
</dbReference>
<dbReference type="InterPro" id="IPR029063">
    <property type="entry name" value="SAM-dependent_MTases_sf"/>
</dbReference>
<dbReference type="PANTHER" id="PTHR22809">
    <property type="entry name" value="METHYLTRANSFERASE-RELATED"/>
    <property type="match status" value="1"/>
</dbReference>
<dbReference type="PANTHER" id="PTHR22809:SF5">
    <property type="entry name" value="TRNA N(3)-METHYLCYTIDINE METHYLTRANSFERASE METTL6"/>
    <property type="match status" value="1"/>
</dbReference>
<dbReference type="Pfam" id="PF08242">
    <property type="entry name" value="Methyltransf_12"/>
    <property type="match status" value="1"/>
</dbReference>
<dbReference type="PIRSF" id="PIRSF037755">
    <property type="entry name" value="Mettl2_prd"/>
    <property type="match status" value="1"/>
</dbReference>
<dbReference type="SUPFAM" id="SSF53335">
    <property type="entry name" value="S-adenosyl-L-methionine-dependent methyltransferases"/>
    <property type="match status" value="1"/>
</dbReference>
<accession>Q8BVH9</accession>
<accession>Q9D9M6</accession>
<accession>Q9DAX6</accession>
<protein>
    <recommendedName>
        <fullName evidence="6">tRNA N(3)-cytidine methyltransferase METTL6</fullName>
        <ecNumber evidence="7">2.1.1.-</ecNumber>
    </recommendedName>
    <alternativeName>
        <fullName evidence="6">Methyltransferase-like protein 6</fullName>
    </alternativeName>
</protein>
<keyword id="KW-0025">Alternative splicing</keyword>
<keyword id="KW-0963">Cytoplasm</keyword>
<keyword id="KW-0489">Methyltransferase</keyword>
<keyword id="KW-0539">Nucleus</keyword>
<keyword id="KW-1185">Reference proteome</keyword>
<keyword id="KW-0949">S-adenosyl-L-methionine</keyword>
<keyword id="KW-0808">Transferase</keyword>
<keyword id="KW-0819">tRNA processing</keyword>